<accession>C4LJL4</accession>
<evidence type="ECO:0000255" key="1">
    <source>
        <dbReference type="HAMAP-Rule" id="MF_01347"/>
    </source>
</evidence>
<organism>
    <name type="scientific">Corynebacterium kroppenstedtii (strain DSM 44385 / JCM 11950 / CIP 105744 / CCUG 35717)</name>
    <dbReference type="NCBI Taxonomy" id="645127"/>
    <lineage>
        <taxon>Bacteria</taxon>
        <taxon>Bacillati</taxon>
        <taxon>Actinomycetota</taxon>
        <taxon>Actinomycetes</taxon>
        <taxon>Mycobacteriales</taxon>
        <taxon>Corynebacteriaceae</taxon>
        <taxon>Corynebacterium</taxon>
    </lineage>
</organism>
<feature type="chain" id="PRO_1000214823" description="ATP synthase subunit beta">
    <location>
        <begin position="1"/>
        <end position="478"/>
    </location>
</feature>
<feature type="binding site" evidence="1">
    <location>
        <begin position="164"/>
        <end position="171"/>
    </location>
    <ligand>
        <name>ATP</name>
        <dbReference type="ChEBI" id="CHEBI:30616"/>
    </ligand>
</feature>
<sequence>MTTALSEQQTGLSGRVARVIGPVVDVEFPRGELPALFNALTVDVDLEAVAKTITLEVAQHLGDNIVRAVSMAPTDGLIRGAEVKDTGKPISVPVGDTVKGHVFNALGDCLDEPGLGRDGEQWSIHRKPPAFDQLEGKTEILETGIKVIDLLTPYVKGGKIGLFGGAGVGKTVLIQEMITRIAREFSGTSVFAGVGERTREGTDLFLEMEEMGVLQDTALVFGQMDEPPGVRMRVALSGLTMAEYFRDVQHQDVLLFIDNIFRFSQAGSEVSTLLGRMPSAVGYQPTLADEMGELQERITSTKGRSITSLQAVYVPADDYTDPAPATVFAHLDATTELDRSIASKGIYPAVNPLTSTSRILEPGIVGEEHYQVAQRVINILQKNKELQDIIAILGMDELSEEDKITVQRARRIERFLGQNFFVAEKFTGLPGSYVPLKDTIDAFRRICDGEYDAYPERCFNGLGGLDDVEAEYKKLQEK</sequence>
<gene>
    <name evidence="1" type="primary">atpD</name>
    <name type="ordered locus">ckrop_1274</name>
</gene>
<reference key="1">
    <citation type="journal article" date="2008" name="J. Biotechnol.">
        <title>Ultrafast pyrosequencing of Corynebacterium kroppenstedtii DSM44385 revealed insights into the physiology of a lipophilic corynebacterium that lacks mycolic acids.</title>
        <authorList>
            <person name="Tauch A."/>
            <person name="Schneider J."/>
            <person name="Szczepanowski R."/>
            <person name="Tilker A."/>
            <person name="Viehoever P."/>
            <person name="Gartemann K.-H."/>
            <person name="Arnold W."/>
            <person name="Blom J."/>
            <person name="Brinkrolf K."/>
            <person name="Brune I."/>
            <person name="Goetker S."/>
            <person name="Weisshaar B."/>
            <person name="Goesmann A."/>
            <person name="Droege M."/>
            <person name="Puehler A."/>
        </authorList>
    </citation>
    <scope>NUCLEOTIDE SEQUENCE [LARGE SCALE GENOMIC DNA]</scope>
    <source>
        <strain>DSM 44385 / JCM 11950 / CIP 105744 / CCUG 35717</strain>
    </source>
</reference>
<protein>
    <recommendedName>
        <fullName evidence="1">ATP synthase subunit beta</fullName>
        <ecNumber evidence="1">7.1.2.2</ecNumber>
    </recommendedName>
    <alternativeName>
        <fullName evidence="1">ATP synthase F1 sector subunit beta</fullName>
    </alternativeName>
    <alternativeName>
        <fullName evidence="1">F-ATPase subunit beta</fullName>
    </alternativeName>
</protein>
<comment type="function">
    <text evidence="1">Produces ATP from ADP in the presence of a proton gradient across the membrane. The catalytic sites are hosted primarily by the beta subunits.</text>
</comment>
<comment type="catalytic activity">
    <reaction evidence="1">
        <text>ATP + H2O + 4 H(+)(in) = ADP + phosphate + 5 H(+)(out)</text>
        <dbReference type="Rhea" id="RHEA:57720"/>
        <dbReference type="ChEBI" id="CHEBI:15377"/>
        <dbReference type="ChEBI" id="CHEBI:15378"/>
        <dbReference type="ChEBI" id="CHEBI:30616"/>
        <dbReference type="ChEBI" id="CHEBI:43474"/>
        <dbReference type="ChEBI" id="CHEBI:456216"/>
        <dbReference type="EC" id="7.1.2.2"/>
    </reaction>
</comment>
<comment type="subunit">
    <text evidence="1">F-type ATPases have 2 components, CF(1) - the catalytic core - and CF(0) - the membrane proton channel. CF(1) has five subunits: alpha(3), beta(3), gamma(1), delta(1), epsilon(1). CF(0) has three main subunits: a(1), b(2) and c(9-12). The alpha and beta chains form an alternating ring which encloses part of the gamma chain. CF(1) is attached to CF(0) by a central stalk formed by the gamma and epsilon chains, while a peripheral stalk is formed by the delta and b chains.</text>
</comment>
<comment type="subcellular location">
    <subcellularLocation>
        <location evidence="1">Cell membrane</location>
        <topology evidence="1">Peripheral membrane protein</topology>
    </subcellularLocation>
</comment>
<comment type="similarity">
    <text evidence="1">Belongs to the ATPase alpha/beta chains family.</text>
</comment>
<dbReference type="EC" id="7.1.2.2" evidence="1"/>
<dbReference type="EMBL" id="CP001620">
    <property type="protein sequence ID" value="ACR18019.1"/>
    <property type="molecule type" value="Genomic_DNA"/>
</dbReference>
<dbReference type="RefSeq" id="WP_012731906.1">
    <property type="nucleotide sequence ID" value="NC_012704.1"/>
</dbReference>
<dbReference type="SMR" id="C4LJL4"/>
<dbReference type="STRING" id="645127.ckrop_1274"/>
<dbReference type="GeneID" id="92726158"/>
<dbReference type="KEGG" id="ckp:ckrop_1274"/>
<dbReference type="eggNOG" id="COG0055">
    <property type="taxonomic scope" value="Bacteria"/>
</dbReference>
<dbReference type="HOGENOM" id="CLU_022398_0_2_11"/>
<dbReference type="OrthoDB" id="9801639at2"/>
<dbReference type="Proteomes" id="UP000001473">
    <property type="component" value="Chromosome"/>
</dbReference>
<dbReference type="GO" id="GO:0005886">
    <property type="term" value="C:plasma membrane"/>
    <property type="evidence" value="ECO:0007669"/>
    <property type="project" value="UniProtKB-SubCell"/>
</dbReference>
<dbReference type="GO" id="GO:0045259">
    <property type="term" value="C:proton-transporting ATP synthase complex"/>
    <property type="evidence" value="ECO:0007669"/>
    <property type="project" value="UniProtKB-KW"/>
</dbReference>
<dbReference type="GO" id="GO:0005524">
    <property type="term" value="F:ATP binding"/>
    <property type="evidence" value="ECO:0007669"/>
    <property type="project" value="UniProtKB-UniRule"/>
</dbReference>
<dbReference type="GO" id="GO:0016887">
    <property type="term" value="F:ATP hydrolysis activity"/>
    <property type="evidence" value="ECO:0007669"/>
    <property type="project" value="InterPro"/>
</dbReference>
<dbReference type="GO" id="GO:0046933">
    <property type="term" value="F:proton-transporting ATP synthase activity, rotational mechanism"/>
    <property type="evidence" value="ECO:0007669"/>
    <property type="project" value="UniProtKB-UniRule"/>
</dbReference>
<dbReference type="CDD" id="cd18110">
    <property type="entry name" value="ATP-synt_F1_beta_C"/>
    <property type="match status" value="1"/>
</dbReference>
<dbReference type="CDD" id="cd18115">
    <property type="entry name" value="ATP-synt_F1_beta_N"/>
    <property type="match status" value="1"/>
</dbReference>
<dbReference type="CDD" id="cd01133">
    <property type="entry name" value="F1-ATPase_beta_CD"/>
    <property type="match status" value="1"/>
</dbReference>
<dbReference type="FunFam" id="1.10.1140.10:FF:000001">
    <property type="entry name" value="ATP synthase subunit beta"/>
    <property type="match status" value="1"/>
</dbReference>
<dbReference type="FunFam" id="2.40.10.170:FF:000005">
    <property type="entry name" value="ATP synthase subunit beta"/>
    <property type="match status" value="1"/>
</dbReference>
<dbReference type="FunFam" id="3.40.50.300:FF:000004">
    <property type="entry name" value="ATP synthase subunit beta"/>
    <property type="match status" value="1"/>
</dbReference>
<dbReference type="Gene3D" id="2.40.10.170">
    <property type="match status" value="1"/>
</dbReference>
<dbReference type="Gene3D" id="1.10.1140.10">
    <property type="entry name" value="Bovine Mitochondrial F1-atpase, Atp Synthase Beta Chain, Chain D, domain 3"/>
    <property type="match status" value="1"/>
</dbReference>
<dbReference type="Gene3D" id="3.40.50.300">
    <property type="entry name" value="P-loop containing nucleotide triphosphate hydrolases"/>
    <property type="match status" value="1"/>
</dbReference>
<dbReference type="HAMAP" id="MF_01347">
    <property type="entry name" value="ATP_synth_beta_bact"/>
    <property type="match status" value="1"/>
</dbReference>
<dbReference type="InterPro" id="IPR003593">
    <property type="entry name" value="AAA+_ATPase"/>
</dbReference>
<dbReference type="InterPro" id="IPR055190">
    <property type="entry name" value="ATP-synt_VA_C"/>
</dbReference>
<dbReference type="InterPro" id="IPR005722">
    <property type="entry name" value="ATP_synth_F1_bsu"/>
</dbReference>
<dbReference type="InterPro" id="IPR020003">
    <property type="entry name" value="ATPase_a/bsu_AS"/>
</dbReference>
<dbReference type="InterPro" id="IPR050053">
    <property type="entry name" value="ATPase_alpha/beta_chains"/>
</dbReference>
<dbReference type="InterPro" id="IPR004100">
    <property type="entry name" value="ATPase_F1/V1/A1_a/bsu_N"/>
</dbReference>
<dbReference type="InterPro" id="IPR036121">
    <property type="entry name" value="ATPase_F1/V1/A1_a/bsu_N_sf"/>
</dbReference>
<dbReference type="InterPro" id="IPR000194">
    <property type="entry name" value="ATPase_F1/V1/A1_a/bsu_nucl-bd"/>
</dbReference>
<dbReference type="InterPro" id="IPR024034">
    <property type="entry name" value="ATPase_F1/V1_b/a_C"/>
</dbReference>
<dbReference type="InterPro" id="IPR027417">
    <property type="entry name" value="P-loop_NTPase"/>
</dbReference>
<dbReference type="NCBIfam" id="TIGR01039">
    <property type="entry name" value="atpD"/>
    <property type="match status" value="1"/>
</dbReference>
<dbReference type="PANTHER" id="PTHR15184">
    <property type="entry name" value="ATP SYNTHASE"/>
    <property type="match status" value="1"/>
</dbReference>
<dbReference type="PANTHER" id="PTHR15184:SF71">
    <property type="entry name" value="ATP SYNTHASE SUBUNIT BETA, MITOCHONDRIAL"/>
    <property type="match status" value="1"/>
</dbReference>
<dbReference type="Pfam" id="PF00006">
    <property type="entry name" value="ATP-synt_ab"/>
    <property type="match status" value="1"/>
</dbReference>
<dbReference type="Pfam" id="PF02874">
    <property type="entry name" value="ATP-synt_ab_N"/>
    <property type="match status" value="1"/>
</dbReference>
<dbReference type="Pfam" id="PF22919">
    <property type="entry name" value="ATP-synt_VA_C"/>
    <property type="match status" value="1"/>
</dbReference>
<dbReference type="SMART" id="SM00382">
    <property type="entry name" value="AAA"/>
    <property type="match status" value="1"/>
</dbReference>
<dbReference type="SUPFAM" id="SSF47917">
    <property type="entry name" value="C-terminal domain of alpha and beta subunits of F1 ATP synthase"/>
    <property type="match status" value="1"/>
</dbReference>
<dbReference type="SUPFAM" id="SSF50615">
    <property type="entry name" value="N-terminal domain of alpha and beta subunits of F1 ATP synthase"/>
    <property type="match status" value="1"/>
</dbReference>
<dbReference type="SUPFAM" id="SSF52540">
    <property type="entry name" value="P-loop containing nucleoside triphosphate hydrolases"/>
    <property type="match status" value="1"/>
</dbReference>
<dbReference type="PROSITE" id="PS00152">
    <property type="entry name" value="ATPASE_ALPHA_BETA"/>
    <property type="match status" value="1"/>
</dbReference>
<proteinExistence type="inferred from homology"/>
<keyword id="KW-0066">ATP synthesis</keyword>
<keyword id="KW-0067">ATP-binding</keyword>
<keyword id="KW-1003">Cell membrane</keyword>
<keyword id="KW-0139">CF(1)</keyword>
<keyword id="KW-0375">Hydrogen ion transport</keyword>
<keyword id="KW-0406">Ion transport</keyword>
<keyword id="KW-0472">Membrane</keyword>
<keyword id="KW-0547">Nucleotide-binding</keyword>
<keyword id="KW-1185">Reference proteome</keyword>
<keyword id="KW-1278">Translocase</keyword>
<keyword id="KW-0813">Transport</keyword>
<name>ATPB_CORK4</name>